<proteinExistence type="inferred from homology"/>
<organism>
    <name type="scientific">Laribacter hongkongensis (strain HLHK9)</name>
    <dbReference type="NCBI Taxonomy" id="557598"/>
    <lineage>
        <taxon>Bacteria</taxon>
        <taxon>Pseudomonadati</taxon>
        <taxon>Pseudomonadota</taxon>
        <taxon>Betaproteobacteria</taxon>
        <taxon>Neisseriales</taxon>
        <taxon>Aquaspirillaceae</taxon>
        <taxon>Laribacter</taxon>
    </lineage>
</organism>
<protein>
    <recommendedName>
        <fullName evidence="1">Trigger factor</fullName>
        <shortName evidence="1">TF</shortName>
        <ecNumber evidence="1">5.2.1.8</ecNumber>
    </recommendedName>
    <alternativeName>
        <fullName evidence="1">PPIase</fullName>
    </alternativeName>
</protein>
<name>TIG_LARHH</name>
<dbReference type="EC" id="5.2.1.8" evidence="1"/>
<dbReference type="EMBL" id="CP001154">
    <property type="protein sequence ID" value="ACO73855.1"/>
    <property type="molecule type" value="Genomic_DNA"/>
</dbReference>
<dbReference type="RefSeq" id="WP_012696347.1">
    <property type="nucleotide sequence ID" value="NC_012559.1"/>
</dbReference>
<dbReference type="SMR" id="C1D538"/>
<dbReference type="STRING" id="557598.LHK_00862"/>
<dbReference type="GeneID" id="75110224"/>
<dbReference type="KEGG" id="lhk:LHK_00862"/>
<dbReference type="eggNOG" id="COG0544">
    <property type="taxonomic scope" value="Bacteria"/>
</dbReference>
<dbReference type="HOGENOM" id="CLU_033058_2_0_4"/>
<dbReference type="Proteomes" id="UP000002010">
    <property type="component" value="Chromosome"/>
</dbReference>
<dbReference type="GO" id="GO:0005737">
    <property type="term" value="C:cytoplasm"/>
    <property type="evidence" value="ECO:0007669"/>
    <property type="project" value="UniProtKB-SubCell"/>
</dbReference>
<dbReference type="GO" id="GO:0003755">
    <property type="term" value="F:peptidyl-prolyl cis-trans isomerase activity"/>
    <property type="evidence" value="ECO:0007669"/>
    <property type="project" value="UniProtKB-UniRule"/>
</dbReference>
<dbReference type="GO" id="GO:0044183">
    <property type="term" value="F:protein folding chaperone"/>
    <property type="evidence" value="ECO:0007669"/>
    <property type="project" value="TreeGrafter"/>
</dbReference>
<dbReference type="GO" id="GO:0043022">
    <property type="term" value="F:ribosome binding"/>
    <property type="evidence" value="ECO:0007669"/>
    <property type="project" value="TreeGrafter"/>
</dbReference>
<dbReference type="GO" id="GO:0051083">
    <property type="term" value="P:'de novo' cotranslational protein folding"/>
    <property type="evidence" value="ECO:0007669"/>
    <property type="project" value="TreeGrafter"/>
</dbReference>
<dbReference type="GO" id="GO:0051301">
    <property type="term" value="P:cell division"/>
    <property type="evidence" value="ECO:0007669"/>
    <property type="project" value="UniProtKB-KW"/>
</dbReference>
<dbReference type="GO" id="GO:0061077">
    <property type="term" value="P:chaperone-mediated protein folding"/>
    <property type="evidence" value="ECO:0007669"/>
    <property type="project" value="TreeGrafter"/>
</dbReference>
<dbReference type="GO" id="GO:0015031">
    <property type="term" value="P:protein transport"/>
    <property type="evidence" value="ECO:0007669"/>
    <property type="project" value="UniProtKB-UniRule"/>
</dbReference>
<dbReference type="GO" id="GO:0043335">
    <property type="term" value="P:protein unfolding"/>
    <property type="evidence" value="ECO:0007669"/>
    <property type="project" value="TreeGrafter"/>
</dbReference>
<dbReference type="FunFam" id="3.10.50.40:FF:000001">
    <property type="entry name" value="Trigger factor"/>
    <property type="match status" value="1"/>
</dbReference>
<dbReference type="Gene3D" id="3.10.50.40">
    <property type="match status" value="1"/>
</dbReference>
<dbReference type="Gene3D" id="3.30.70.1050">
    <property type="entry name" value="Trigger factor ribosome-binding domain"/>
    <property type="match status" value="1"/>
</dbReference>
<dbReference type="Gene3D" id="1.10.3120.10">
    <property type="entry name" value="Trigger factor, C-terminal domain"/>
    <property type="match status" value="1"/>
</dbReference>
<dbReference type="HAMAP" id="MF_00303">
    <property type="entry name" value="Trigger_factor_Tig"/>
    <property type="match status" value="1"/>
</dbReference>
<dbReference type="InterPro" id="IPR046357">
    <property type="entry name" value="PPIase_dom_sf"/>
</dbReference>
<dbReference type="InterPro" id="IPR001179">
    <property type="entry name" value="PPIase_FKBP_dom"/>
</dbReference>
<dbReference type="InterPro" id="IPR005215">
    <property type="entry name" value="Trig_fac"/>
</dbReference>
<dbReference type="InterPro" id="IPR008880">
    <property type="entry name" value="Trigger_fac_C"/>
</dbReference>
<dbReference type="InterPro" id="IPR037041">
    <property type="entry name" value="Trigger_fac_C_sf"/>
</dbReference>
<dbReference type="InterPro" id="IPR008881">
    <property type="entry name" value="Trigger_fac_ribosome-bd_bac"/>
</dbReference>
<dbReference type="InterPro" id="IPR036611">
    <property type="entry name" value="Trigger_fac_ribosome-bd_sf"/>
</dbReference>
<dbReference type="InterPro" id="IPR027304">
    <property type="entry name" value="Trigger_fact/SurA_dom_sf"/>
</dbReference>
<dbReference type="NCBIfam" id="TIGR00115">
    <property type="entry name" value="tig"/>
    <property type="match status" value="1"/>
</dbReference>
<dbReference type="PANTHER" id="PTHR30560">
    <property type="entry name" value="TRIGGER FACTOR CHAPERONE AND PEPTIDYL-PROLYL CIS/TRANS ISOMERASE"/>
    <property type="match status" value="1"/>
</dbReference>
<dbReference type="PANTHER" id="PTHR30560:SF3">
    <property type="entry name" value="TRIGGER FACTOR-LIKE PROTEIN TIG, CHLOROPLASTIC"/>
    <property type="match status" value="1"/>
</dbReference>
<dbReference type="Pfam" id="PF00254">
    <property type="entry name" value="FKBP_C"/>
    <property type="match status" value="1"/>
</dbReference>
<dbReference type="Pfam" id="PF05698">
    <property type="entry name" value="Trigger_C"/>
    <property type="match status" value="1"/>
</dbReference>
<dbReference type="Pfam" id="PF05697">
    <property type="entry name" value="Trigger_N"/>
    <property type="match status" value="1"/>
</dbReference>
<dbReference type="PIRSF" id="PIRSF003095">
    <property type="entry name" value="Trigger_factor"/>
    <property type="match status" value="1"/>
</dbReference>
<dbReference type="SUPFAM" id="SSF54534">
    <property type="entry name" value="FKBP-like"/>
    <property type="match status" value="1"/>
</dbReference>
<dbReference type="SUPFAM" id="SSF109998">
    <property type="entry name" value="Triger factor/SurA peptide-binding domain-like"/>
    <property type="match status" value="1"/>
</dbReference>
<dbReference type="SUPFAM" id="SSF102735">
    <property type="entry name" value="Trigger factor ribosome-binding domain"/>
    <property type="match status" value="1"/>
</dbReference>
<dbReference type="PROSITE" id="PS50059">
    <property type="entry name" value="FKBP_PPIASE"/>
    <property type="match status" value="1"/>
</dbReference>
<evidence type="ECO:0000255" key="1">
    <source>
        <dbReference type="HAMAP-Rule" id="MF_00303"/>
    </source>
</evidence>
<comment type="function">
    <text evidence="1">Involved in protein export. Acts as a chaperone by maintaining the newly synthesized protein in an open conformation. Functions as a peptidyl-prolyl cis-trans isomerase.</text>
</comment>
<comment type="catalytic activity">
    <reaction evidence="1">
        <text>[protein]-peptidylproline (omega=180) = [protein]-peptidylproline (omega=0)</text>
        <dbReference type="Rhea" id="RHEA:16237"/>
        <dbReference type="Rhea" id="RHEA-COMP:10747"/>
        <dbReference type="Rhea" id="RHEA-COMP:10748"/>
        <dbReference type="ChEBI" id="CHEBI:83833"/>
        <dbReference type="ChEBI" id="CHEBI:83834"/>
        <dbReference type="EC" id="5.2.1.8"/>
    </reaction>
</comment>
<comment type="subcellular location">
    <subcellularLocation>
        <location>Cytoplasm</location>
    </subcellularLocation>
    <text evidence="1">About half TF is bound to the ribosome near the polypeptide exit tunnel while the other half is free in the cytoplasm.</text>
</comment>
<comment type="domain">
    <text evidence="1">Consists of 3 domains; the N-terminus binds the ribosome, the middle domain has PPIase activity, while the C-terminus has intrinsic chaperone activity on its own.</text>
</comment>
<comment type="similarity">
    <text evidence="1">Belongs to the FKBP-type PPIase family. Tig subfamily.</text>
</comment>
<sequence>MQVQLETLGNLERRLDIALPLTDIDAEVQKRLARVARTAKIAGFRPGKAPLKMVERNYGASVREDVLGEQVQLGFSKAVAEQKLRVAGYPRFEPAADNDPAAGEFKFSATFEVYPELTLGSLDGKEVEKAVCEVTDAEIDKTIDVLRKQRTRFNRVERAAADTDRVIIDFAGKIDGEAFAGGSSENFPFVLGQGQMLPEFEAGVIGMKEGESKDVEVSFPADYHGKDVAGKTAVFTITVKNVAEAILPEIDADFAKALGITDGDVSKLRAEIEKNVKREIARRLAARNKEAVMQVLIDANPLELPQSLVMMEISRLMHQAKQDLAQRGMDVKSLPDLPADLFRDQAARRVALGLILAELVKANELKASPEQIKARVEEWADSYEHPEEVIKWYYESPERLEGPENLVLEDNVVEFVLSQAKVNEKAVSFDELMGNA</sequence>
<feature type="chain" id="PRO_1000198162" description="Trigger factor">
    <location>
        <begin position="1"/>
        <end position="436"/>
    </location>
</feature>
<feature type="domain" description="PPIase FKBP-type" evidence="1">
    <location>
        <begin position="163"/>
        <end position="248"/>
    </location>
</feature>
<accession>C1D538</accession>
<reference key="1">
    <citation type="journal article" date="2009" name="PLoS Genet.">
        <title>The complete genome and proteome of Laribacter hongkongensis reveal potential mechanisms for adaptations to different temperatures and habitats.</title>
        <authorList>
            <person name="Woo P.C.Y."/>
            <person name="Lau S.K.P."/>
            <person name="Tse H."/>
            <person name="Teng J.L.L."/>
            <person name="Curreem S.O."/>
            <person name="Tsang A.K.L."/>
            <person name="Fan R.Y.Y."/>
            <person name="Wong G.K.M."/>
            <person name="Huang Y."/>
            <person name="Loman N.J."/>
            <person name="Snyder L.A.S."/>
            <person name="Cai J.J."/>
            <person name="Huang J.-D."/>
            <person name="Mak W."/>
            <person name="Pallen M.J."/>
            <person name="Lok S."/>
            <person name="Yuen K.-Y."/>
        </authorList>
    </citation>
    <scope>NUCLEOTIDE SEQUENCE [LARGE SCALE GENOMIC DNA]</scope>
    <source>
        <strain>HLHK9</strain>
    </source>
</reference>
<gene>
    <name evidence="1" type="primary">tig</name>
    <name type="ordered locus">LHK_00862</name>
</gene>
<keyword id="KW-0131">Cell cycle</keyword>
<keyword id="KW-0132">Cell division</keyword>
<keyword id="KW-0143">Chaperone</keyword>
<keyword id="KW-0963">Cytoplasm</keyword>
<keyword id="KW-0413">Isomerase</keyword>
<keyword id="KW-1185">Reference proteome</keyword>
<keyword id="KW-0697">Rotamase</keyword>